<accession>Q8WW14</accession>
<accession>B3KUM9</accession>
<accession>D3DRC3</accession>
<accession>K7EKP3</accession>
<comment type="function">
    <text evidence="2">Microtubule inner protein (MIP) part of the dynein-decorated doublet microtubules (DMTs) in flagellum axoneme. May serve to reinforce and thus stabilize the microtubule structure in the sperm flagella.</text>
</comment>
<comment type="subunit">
    <text evidence="2">Microtubule inner protein component of sperm flagellar doublet microtubules.</text>
</comment>
<comment type="interaction">
    <interactant intactId="EBI-12831628">
        <id>Q8WW14-2</id>
    </interactant>
    <interactant intactId="EBI-17183751">
        <id>X5D778</id>
        <label>ANKRD11</label>
    </interactant>
    <organismsDiffer>false</organismsDiffer>
    <experiments>3</experiments>
</comment>
<comment type="interaction">
    <interactant intactId="EBI-12831628">
        <id>Q8WW14-2</id>
    </interactant>
    <interactant intactId="EBI-1050106">
        <id>O75934</id>
        <label>BCAS2</label>
    </interactant>
    <organismsDiffer>false</organismsDiffer>
    <experiments>3</experiments>
</comment>
<comment type="interaction">
    <interactant intactId="EBI-12831628">
        <id>Q8WW14-2</id>
    </interactant>
    <interactant intactId="EBI-10242151">
        <id>Q53EP0-3</id>
        <label>FNDC3B</label>
    </interactant>
    <organismsDiffer>false</organismsDiffer>
    <experiments>3</experiments>
</comment>
<comment type="interaction">
    <interactant intactId="EBI-12831628">
        <id>Q8WW14-2</id>
    </interactant>
    <interactant intactId="EBI-347538">
        <id>Q9Y4H4</id>
        <label>GPSM3</label>
    </interactant>
    <organismsDiffer>false</organismsDiffer>
    <experiments>3</experiments>
</comment>
<comment type="interaction">
    <interactant intactId="EBI-12831628">
        <id>Q8WW14-2</id>
    </interactant>
    <interactant intactId="EBI-2340269">
        <id>Q13064</id>
        <label>MKRN3</label>
    </interactant>
    <organismsDiffer>false</organismsDiffer>
    <experiments>3</experiments>
</comment>
<comment type="interaction">
    <interactant intactId="EBI-12831628">
        <id>Q8WW14-2</id>
    </interactant>
    <interactant intactId="EBI-5662487">
        <id>Q8TDC0</id>
        <label>MYOZ3</label>
    </interactant>
    <organismsDiffer>false</organismsDiffer>
    <experiments>3</experiments>
</comment>
<comment type="interaction">
    <interactant intactId="EBI-12831628">
        <id>Q8WW14-2</id>
    </interactant>
    <interactant intactId="EBI-742688">
        <id>Q9NZD8</id>
        <label>SPG21</label>
    </interactant>
    <organismsDiffer>false</organismsDiffer>
    <experiments>3</experiments>
</comment>
<comment type="subcellular location">
    <subcellularLocation>
        <location evidence="2">Cytoplasm</location>
        <location evidence="2">Cytoskeleton</location>
        <location evidence="2">Flagellum axoneme</location>
    </subcellularLocation>
    <subcellularLocation>
        <location evidence="3">Cytoplasm</location>
    </subcellularLocation>
    <subcellularLocation>
        <location evidence="2">Nucleus</location>
    </subcellularLocation>
    <text evidence="1 2">Localizes to the A-tubules of DMTs (By similarity). Located in the cytoplasm of spermatocytes and the nuclei of round spermatids and elongated spermatids (By similarity).</text>
</comment>
<comment type="alternative products">
    <event type="alternative splicing"/>
    <isoform>
        <id>Q8WW14-1</id>
        <name>1</name>
        <sequence type="displayed"/>
    </isoform>
    <isoform>
        <id>Q8WW14-2</id>
        <name>2</name>
        <sequence type="described" ref="VSP_036119"/>
    </isoform>
    <isoform>
        <id>Q8WW14-3</id>
        <name>3</name>
        <sequence type="described" ref="VSP_036117 VSP_036118"/>
    </isoform>
</comment>
<comment type="tissue specificity">
    <text evidence="3">Expressed in testis (at protein level). Strongly expressed in peritubular cells and Leydig cells and weakly expressed in the cytoplasm of spermatocytes.</text>
</comment>
<proteinExistence type="evidence at protein level"/>
<sequence>MEPSKTFMRNLPITPGYSGFVPFLSCQGMSKEDDMNHCVKTFQEKTQRYKEQLRELCCAVATAPKLKPVNSEETVLQALHQYNLQYHPLILECKYVKKPLQEPPIPGWAGYLPRAKVTEFGCGTRYTVMAKNCYKDFLEITERAKKAHLKPYEEIYGVSSTKTSAPSPKVLQHEELLPKYPDFSIPDGSCPALGRPLREDPKTPLTCGCAQRPSIPCSGKMYLEPLSSAKYAEG</sequence>
<feature type="chain" id="PRO_0000089807" description="Sperm-associated microtubule inner protein 5">
    <location>
        <begin position="1"/>
        <end position="234"/>
    </location>
</feature>
<feature type="splice variant" id="VSP_036117" description="In isoform 3." evidence="4">
    <original>ECKYVKKPLQEPPIPGWAG</original>
    <variation>GSSALKPFPLTPGHPCRFS</variation>
    <location>
        <begin position="92"/>
        <end position="110"/>
    </location>
</feature>
<feature type="splice variant" id="VSP_036118" description="In isoform 3." evidence="4">
    <location>
        <begin position="111"/>
        <end position="234"/>
    </location>
</feature>
<feature type="splice variant" id="VSP_036119" description="In isoform 2." evidence="5">
    <location>
        <begin position="155"/>
        <end position="234"/>
    </location>
</feature>
<feature type="sequence variant" id="VAR_050854" description="In dbSNP:rs11551267.">
    <original>T</original>
    <variation>M</variation>
    <location>
        <position position="124"/>
    </location>
</feature>
<gene>
    <name evidence="6" type="primary">SPMIP5</name>
    <name type="synonym">C10orf82</name>
</gene>
<reference key="1">
    <citation type="journal article" date="2004" name="Nat. Genet.">
        <title>Complete sequencing and characterization of 21,243 full-length human cDNAs.</title>
        <authorList>
            <person name="Ota T."/>
            <person name="Suzuki Y."/>
            <person name="Nishikawa T."/>
            <person name="Otsuki T."/>
            <person name="Sugiyama T."/>
            <person name="Irie R."/>
            <person name="Wakamatsu A."/>
            <person name="Hayashi K."/>
            <person name="Sato H."/>
            <person name="Nagai K."/>
            <person name="Kimura K."/>
            <person name="Makita H."/>
            <person name="Sekine M."/>
            <person name="Obayashi M."/>
            <person name="Nishi T."/>
            <person name="Shibahara T."/>
            <person name="Tanaka T."/>
            <person name="Ishii S."/>
            <person name="Yamamoto J."/>
            <person name="Saito K."/>
            <person name="Kawai Y."/>
            <person name="Isono Y."/>
            <person name="Nakamura Y."/>
            <person name="Nagahari K."/>
            <person name="Murakami K."/>
            <person name="Yasuda T."/>
            <person name="Iwayanagi T."/>
            <person name="Wagatsuma M."/>
            <person name="Shiratori A."/>
            <person name="Sudo H."/>
            <person name="Hosoiri T."/>
            <person name="Kaku Y."/>
            <person name="Kodaira H."/>
            <person name="Kondo H."/>
            <person name="Sugawara M."/>
            <person name="Takahashi M."/>
            <person name="Kanda K."/>
            <person name="Yokoi T."/>
            <person name="Furuya T."/>
            <person name="Kikkawa E."/>
            <person name="Omura Y."/>
            <person name="Abe K."/>
            <person name="Kamihara K."/>
            <person name="Katsuta N."/>
            <person name="Sato K."/>
            <person name="Tanikawa M."/>
            <person name="Yamazaki M."/>
            <person name="Ninomiya K."/>
            <person name="Ishibashi T."/>
            <person name="Yamashita H."/>
            <person name="Murakawa K."/>
            <person name="Fujimori K."/>
            <person name="Tanai H."/>
            <person name="Kimata M."/>
            <person name="Watanabe M."/>
            <person name="Hiraoka S."/>
            <person name="Chiba Y."/>
            <person name="Ishida S."/>
            <person name="Ono Y."/>
            <person name="Takiguchi S."/>
            <person name="Watanabe S."/>
            <person name="Yosida M."/>
            <person name="Hotuta T."/>
            <person name="Kusano J."/>
            <person name="Kanehori K."/>
            <person name="Takahashi-Fujii A."/>
            <person name="Hara H."/>
            <person name="Tanase T.-O."/>
            <person name="Nomura Y."/>
            <person name="Togiya S."/>
            <person name="Komai F."/>
            <person name="Hara R."/>
            <person name="Takeuchi K."/>
            <person name="Arita M."/>
            <person name="Imose N."/>
            <person name="Musashino K."/>
            <person name="Yuuki H."/>
            <person name="Oshima A."/>
            <person name="Sasaki N."/>
            <person name="Aotsuka S."/>
            <person name="Yoshikawa Y."/>
            <person name="Matsunawa H."/>
            <person name="Ichihara T."/>
            <person name="Shiohata N."/>
            <person name="Sano S."/>
            <person name="Moriya S."/>
            <person name="Momiyama H."/>
            <person name="Satoh N."/>
            <person name="Takami S."/>
            <person name="Terashima Y."/>
            <person name="Suzuki O."/>
            <person name="Nakagawa S."/>
            <person name="Senoh A."/>
            <person name="Mizoguchi H."/>
            <person name="Goto Y."/>
            <person name="Shimizu F."/>
            <person name="Wakebe H."/>
            <person name="Hishigaki H."/>
            <person name="Watanabe T."/>
            <person name="Sugiyama A."/>
            <person name="Takemoto M."/>
            <person name="Kawakami B."/>
            <person name="Yamazaki M."/>
            <person name="Watanabe K."/>
            <person name="Kumagai A."/>
            <person name="Itakura S."/>
            <person name="Fukuzumi Y."/>
            <person name="Fujimori Y."/>
            <person name="Komiyama M."/>
            <person name="Tashiro H."/>
            <person name="Tanigami A."/>
            <person name="Fujiwara T."/>
            <person name="Ono T."/>
            <person name="Yamada K."/>
            <person name="Fujii Y."/>
            <person name="Ozaki K."/>
            <person name="Hirao M."/>
            <person name="Ohmori Y."/>
            <person name="Kawabata A."/>
            <person name="Hikiji T."/>
            <person name="Kobatake N."/>
            <person name="Inagaki H."/>
            <person name="Ikema Y."/>
            <person name="Okamoto S."/>
            <person name="Okitani R."/>
            <person name="Kawakami T."/>
            <person name="Noguchi S."/>
            <person name="Itoh T."/>
            <person name="Shigeta K."/>
            <person name="Senba T."/>
            <person name="Matsumura K."/>
            <person name="Nakajima Y."/>
            <person name="Mizuno T."/>
            <person name="Morinaga M."/>
            <person name="Sasaki M."/>
            <person name="Togashi T."/>
            <person name="Oyama M."/>
            <person name="Hata H."/>
            <person name="Watanabe M."/>
            <person name="Komatsu T."/>
            <person name="Mizushima-Sugano J."/>
            <person name="Satoh T."/>
            <person name="Shirai Y."/>
            <person name="Takahashi Y."/>
            <person name="Nakagawa K."/>
            <person name="Okumura K."/>
            <person name="Nagase T."/>
            <person name="Nomura N."/>
            <person name="Kikuchi H."/>
            <person name="Masuho Y."/>
            <person name="Yamashita R."/>
            <person name="Nakai K."/>
            <person name="Yada T."/>
            <person name="Nakamura Y."/>
            <person name="Ohara O."/>
            <person name="Isogai T."/>
            <person name="Sugano S."/>
        </authorList>
    </citation>
    <scope>NUCLEOTIDE SEQUENCE [LARGE SCALE MRNA] (ISOFORM 3)</scope>
    <source>
        <tissue>Testis</tissue>
    </source>
</reference>
<reference key="2">
    <citation type="journal article" date="2004" name="Nature">
        <title>The DNA sequence and comparative analysis of human chromosome 10.</title>
        <authorList>
            <person name="Deloukas P."/>
            <person name="Earthrowl M.E."/>
            <person name="Grafham D.V."/>
            <person name="Rubenfield M."/>
            <person name="French L."/>
            <person name="Steward C.A."/>
            <person name="Sims S.K."/>
            <person name="Jones M.C."/>
            <person name="Searle S."/>
            <person name="Scott C."/>
            <person name="Howe K."/>
            <person name="Hunt S.E."/>
            <person name="Andrews T.D."/>
            <person name="Gilbert J.G.R."/>
            <person name="Swarbreck D."/>
            <person name="Ashurst J.L."/>
            <person name="Taylor A."/>
            <person name="Battles J."/>
            <person name="Bird C.P."/>
            <person name="Ainscough R."/>
            <person name="Almeida J.P."/>
            <person name="Ashwell R.I.S."/>
            <person name="Ambrose K.D."/>
            <person name="Babbage A.K."/>
            <person name="Bagguley C.L."/>
            <person name="Bailey J."/>
            <person name="Banerjee R."/>
            <person name="Bates K."/>
            <person name="Beasley H."/>
            <person name="Bray-Allen S."/>
            <person name="Brown A.J."/>
            <person name="Brown J.Y."/>
            <person name="Burford D.C."/>
            <person name="Burrill W."/>
            <person name="Burton J."/>
            <person name="Cahill P."/>
            <person name="Camire D."/>
            <person name="Carter N.P."/>
            <person name="Chapman J.C."/>
            <person name="Clark S.Y."/>
            <person name="Clarke G."/>
            <person name="Clee C.M."/>
            <person name="Clegg S."/>
            <person name="Corby N."/>
            <person name="Coulson A."/>
            <person name="Dhami P."/>
            <person name="Dutta I."/>
            <person name="Dunn M."/>
            <person name="Faulkner L."/>
            <person name="Frankish A."/>
            <person name="Frankland J.A."/>
            <person name="Garner P."/>
            <person name="Garnett J."/>
            <person name="Gribble S."/>
            <person name="Griffiths C."/>
            <person name="Grocock R."/>
            <person name="Gustafson E."/>
            <person name="Hammond S."/>
            <person name="Harley J.L."/>
            <person name="Hart E."/>
            <person name="Heath P.D."/>
            <person name="Ho T.P."/>
            <person name="Hopkins B."/>
            <person name="Horne J."/>
            <person name="Howden P.J."/>
            <person name="Huckle E."/>
            <person name="Hynds C."/>
            <person name="Johnson C."/>
            <person name="Johnson D."/>
            <person name="Kana A."/>
            <person name="Kay M."/>
            <person name="Kimberley A.M."/>
            <person name="Kershaw J.K."/>
            <person name="Kokkinaki M."/>
            <person name="Laird G.K."/>
            <person name="Lawlor S."/>
            <person name="Lee H.M."/>
            <person name="Leongamornlert D.A."/>
            <person name="Laird G."/>
            <person name="Lloyd C."/>
            <person name="Lloyd D.M."/>
            <person name="Loveland J."/>
            <person name="Lovell J."/>
            <person name="McLaren S."/>
            <person name="McLay K.E."/>
            <person name="McMurray A."/>
            <person name="Mashreghi-Mohammadi M."/>
            <person name="Matthews L."/>
            <person name="Milne S."/>
            <person name="Nickerson T."/>
            <person name="Nguyen M."/>
            <person name="Overton-Larty E."/>
            <person name="Palmer S.A."/>
            <person name="Pearce A.V."/>
            <person name="Peck A.I."/>
            <person name="Pelan S."/>
            <person name="Phillimore B."/>
            <person name="Porter K."/>
            <person name="Rice C.M."/>
            <person name="Rogosin A."/>
            <person name="Ross M.T."/>
            <person name="Sarafidou T."/>
            <person name="Sehra H.K."/>
            <person name="Shownkeen R."/>
            <person name="Skuce C.D."/>
            <person name="Smith M."/>
            <person name="Standring L."/>
            <person name="Sycamore N."/>
            <person name="Tester J."/>
            <person name="Thorpe A."/>
            <person name="Torcasso W."/>
            <person name="Tracey A."/>
            <person name="Tromans A."/>
            <person name="Tsolas J."/>
            <person name="Wall M."/>
            <person name="Walsh J."/>
            <person name="Wang H."/>
            <person name="Weinstock K."/>
            <person name="West A.P."/>
            <person name="Willey D.L."/>
            <person name="Whitehead S.L."/>
            <person name="Wilming L."/>
            <person name="Wray P.W."/>
            <person name="Young L."/>
            <person name="Chen Y."/>
            <person name="Lovering R.C."/>
            <person name="Moschonas N.K."/>
            <person name="Siebert R."/>
            <person name="Fechtel K."/>
            <person name="Bentley D."/>
            <person name="Durbin R.M."/>
            <person name="Hubbard T."/>
            <person name="Doucette-Stamm L."/>
            <person name="Beck S."/>
            <person name="Smith D.R."/>
            <person name="Rogers J."/>
        </authorList>
    </citation>
    <scope>NUCLEOTIDE SEQUENCE [LARGE SCALE GENOMIC DNA]</scope>
</reference>
<reference key="3">
    <citation type="submission" date="2005-09" db="EMBL/GenBank/DDBJ databases">
        <authorList>
            <person name="Mural R.J."/>
            <person name="Istrail S."/>
            <person name="Sutton G.G."/>
            <person name="Florea L."/>
            <person name="Halpern A.L."/>
            <person name="Mobarry C.M."/>
            <person name="Lippert R."/>
            <person name="Walenz B."/>
            <person name="Shatkay H."/>
            <person name="Dew I."/>
            <person name="Miller J.R."/>
            <person name="Flanigan M.J."/>
            <person name="Edwards N.J."/>
            <person name="Bolanos R."/>
            <person name="Fasulo D."/>
            <person name="Halldorsson B.V."/>
            <person name="Hannenhalli S."/>
            <person name="Turner R."/>
            <person name="Yooseph S."/>
            <person name="Lu F."/>
            <person name="Nusskern D.R."/>
            <person name="Shue B.C."/>
            <person name="Zheng X.H."/>
            <person name="Zhong F."/>
            <person name="Delcher A.L."/>
            <person name="Huson D.H."/>
            <person name="Kravitz S.A."/>
            <person name="Mouchard L."/>
            <person name="Reinert K."/>
            <person name="Remington K.A."/>
            <person name="Clark A.G."/>
            <person name="Waterman M.S."/>
            <person name="Eichler E.E."/>
            <person name="Adams M.D."/>
            <person name="Hunkapiller M.W."/>
            <person name="Myers E.W."/>
            <person name="Venter J.C."/>
        </authorList>
    </citation>
    <scope>NUCLEOTIDE SEQUENCE [LARGE SCALE GENOMIC DNA]</scope>
</reference>
<reference key="4">
    <citation type="journal article" date="2004" name="Genome Res.">
        <title>The status, quality, and expansion of the NIH full-length cDNA project: the Mammalian Gene Collection (MGC).</title>
        <authorList>
            <consortium name="The MGC Project Team"/>
        </authorList>
    </citation>
    <scope>NUCLEOTIDE SEQUENCE [LARGE SCALE MRNA] (ISOFORM 2)</scope>
    <source>
        <tissue>Testis</tissue>
    </source>
</reference>
<reference key="5">
    <citation type="journal article" date="2015" name="Biol. Reprod.">
        <title>Combining RNA and protein profiling data with network interactions identifies genes associated with spermatogenesis in mouse and human.</title>
        <authorList>
            <person name="Petit F.G."/>
            <person name="Kervarrec C."/>
            <person name="Jamin S.P."/>
            <person name="Smagulova F."/>
            <person name="Hao C."/>
            <person name="Becker E."/>
            <person name="Jegou B."/>
            <person name="Chalmel F."/>
            <person name="Primig M."/>
        </authorList>
    </citation>
    <scope>TISSUE SPECIFICITY</scope>
</reference>
<dbReference type="EMBL" id="AK097587">
    <property type="protein sequence ID" value="BAG53491.1"/>
    <property type="molecule type" value="mRNA"/>
</dbReference>
<dbReference type="EMBL" id="AC016825">
    <property type="status" value="NOT_ANNOTATED_CDS"/>
    <property type="molecule type" value="Genomic_DNA"/>
</dbReference>
<dbReference type="EMBL" id="CH471066">
    <property type="protein sequence ID" value="EAW49444.1"/>
    <property type="molecule type" value="Genomic_DNA"/>
</dbReference>
<dbReference type="EMBL" id="CH471066">
    <property type="protein sequence ID" value="EAW49445.1"/>
    <property type="molecule type" value="Genomic_DNA"/>
</dbReference>
<dbReference type="EMBL" id="BC021737">
    <property type="protein sequence ID" value="AAH21737.1"/>
    <property type="molecule type" value="mRNA"/>
</dbReference>
<dbReference type="CCDS" id="CCDS7596.1">
    <molecule id="Q8WW14-2"/>
</dbReference>
<dbReference type="CCDS" id="CCDS81510.1">
    <molecule id="Q8WW14-1"/>
</dbReference>
<dbReference type="RefSeq" id="NP_001317071.1">
    <molecule id="Q8WW14-1"/>
    <property type="nucleotide sequence ID" value="NM_001330142.3"/>
</dbReference>
<dbReference type="RefSeq" id="NP_001337859.1">
    <molecule id="Q8WW14-1"/>
    <property type="nucleotide sequence ID" value="NM_001350930.2"/>
</dbReference>
<dbReference type="RefSeq" id="NP_001337860.1">
    <molecule id="Q8WW14-1"/>
    <property type="nucleotide sequence ID" value="NM_001350931.2"/>
</dbReference>
<dbReference type="RefSeq" id="NP_653262.1">
    <molecule id="Q8WW14-2"/>
    <property type="nucleotide sequence ID" value="NM_144661.4"/>
</dbReference>
<dbReference type="RefSeq" id="XP_016871242.1">
    <property type="nucleotide sequence ID" value="XM_017015753.1"/>
</dbReference>
<dbReference type="RefSeq" id="XP_016871244.1">
    <property type="nucleotide sequence ID" value="XM_017015755.1"/>
</dbReference>
<dbReference type="SMR" id="Q8WW14"/>
<dbReference type="BioGRID" id="126799">
    <property type="interactions" value="16"/>
</dbReference>
<dbReference type="IntAct" id="Q8WW14">
    <property type="interactions" value="14"/>
</dbReference>
<dbReference type="GlyGen" id="Q8WW14">
    <property type="glycosylation" value="1 site"/>
</dbReference>
<dbReference type="BioMuta" id="C10orf82"/>
<dbReference type="DMDM" id="221222443"/>
<dbReference type="MassIVE" id="Q8WW14"/>
<dbReference type="PaxDb" id="9606-ENSP00000358212"/>
<dbReference type="PeptideAtlas" id="Q8WW14"/>
<dbReference type="ProteomicsDB" id="74845">
    <molecule id="Q8WW14-1"/>
</dbReference>
<dbReference type="ProteomicsDB" id="74846">
    <molecule id="Q8WW14-2"/>
</dbReference>
<dbReference type="ProteomicsDB" id="74847">
    <molecule id="Q8WW14-3"/>
</dbReference>
<dbReference type="Antibodypedia" id="53097">
    <property type="antibodies" value="62 antibodies from 11 providers"/>
</dbReference>
<dbReference type="DNASU" id="143379"/>
<dbReference type="Ensembl" id="ENST00000369210.7">
    <molecule id="Q8WW14-2"/>
    <property type="protein sequence ID" value="ENSP00000358212.3"/>
    <property type="gene ID" value="ENSG00000165863.17"/>
</dbReference>
<dbReference type="Ensembl" id="ENST00000588184.2">
    <molecule id="Q8WW14-1"/>
    <property type="protein sequence ID" value="ENSP00000465712.1"/>
    <property type="gene ID" value="ENSG00000165863.17"/>
</dbReference>
<dbReference type="Ensembl" id="ENST00000709150.1">
    <molecule id="Q8WW14-1"/>
    <property type="protein sequence ID" value="ENSP00000517527.1"/>
    <property type="gene ID" value="ENSG00000291892.1"/>
</dbReference>
<dbReference type="Ensembl" id="ENST00000709151.1">
    <molecule id="Q8WW14-2"/>
    <property type="protein sequence ID" value="ENSP00000517528.1"/>
    <property type="gene ID" value="ENSG00000291892.1"/>
</dbReference>
<dbReference type="GeneID" id="143379"/>
<dbReference type="KEGG" id="hsa:143379"/>
<dbReference type="MANE-Select" id="ENST00000588184.2">
    <property type="protein sequence ID" value="ENSP00000465712.1"/>
    <property type="RefSeq nucleotide sequence ID" value="NM_001350931.2"/>
    <property type="RefSeq protein sequence ID" value="NP_001337860.1"/>
</dbReference>
<dbReference type="UCSC" id="uc001lcr.3">
    <molecule id="Q8WW14-1"/>
    <property type="organism name" value="human"/>
</dbReference>
<dbReference type="AGR" id="HGNC:28500"/>
<dbReference type="CTD" id="143379"/>
<dbReference type="GeneCards" id="SPMIP5"/>
<dbReference type="HGNC" id="HGNC:28500">
    <property type="gene designation" value="SPMIP5"/>
</dbReference>
<dbReference type="HPA" id="ENSG00000165863">
    <property type="expression patterns" value="Tissue enriched (testis)"/>
</dbReference>
<dbReference type="neXtProt" id="NX_Q8WW14"/>
<dbReference type="OpenTargets" id="ENSG00000165863"/>
<dbReference type="PharmGKB" id="PA134919914"/>
<dbReference type="VEuPathDB" id="HostDB:ENSG00000165863"/>
<dbReference type="eggNOG" id="ENOG502SAX8">
    <property type="taxonomic scope" value="Eukaryota"/>
</dbReference>
<dbReference type="GeneTree" id="ENSGT00390000017460"/>
<dbReference type="HOGENOM" id="CLU_143590_0_0_1"/>
<dbReference type="InParanoid" id="Q8WW14"/>
<dbReference type="OMA" id="PGWAGFL"/>
<dbReference type="OrthoDB" id="2019884at2759"/>
<dbReference type="PAN-GO" id="Q8WW14">
    <property type="GO annotations" value="0 GO annotations based on evolutionary models"/>
</dbReference>
<dbReference type="PhylomeDB" id="Q8WW14"/>
<dbReference type="TreeFam" id="TF337656"/>
<dbReference type="PathwayCommons" id="Q8WW14"/>
<dbReference type="SignaLink" id="Q8WW14"/>
<dbReference type="BioGRID-ORCS" id="143379">
    <property type="hits" value="13 hits in 1118 CRISPR screens"/>
</dbReference>
<dbReference type="GenomeRNAi" id="143379"/>
<dbReference type="Pharos" id="Q8WW14">
    <property type="development level" value="Tdark"/>
</dbReference>
<dbReference type="PRO" id="PR:Q8WW14"/>
<dbReference type="Proteomes" id="UP000005640">
    <property type="component" value="Chromosome 10"/>
</dbReference>
<dbReference type="RNAct" id="Q8WW14">
    <property type="molecule type" value="protein"/>
</dbReference>
<dbReference type="Bgee" id="ENSG00000165863">
    <property type="expression patterns" value="Expressed in sperm and 111 other cell types or tissues"/>
</dbReference>
<dbReference type="GO" id="GO:0005737">
    <property type="term" value="C:cytoplasm"/>
    <property type="evidence" value="ECO:0007669"/>
    <property type="project" value="UniProtKB-SubCell"/>
</dbReference>
<dbReference type="GO" id="GO:0005856">
    <property type="term" value="C:cytoskeleton"/>
    <property type="evidence" value="ECO:0007669"/>
    <property type="project" value="UniProtKB-KW"/>
</dbReference>
<dbReference type="GO" id="GO:0031514">
    <property type="term" value="C:motile cilium"/>
    <property type="evidence" value="ECO:0007669"/>
    <property type="project" value="UniProtKB-KW"/>
</dbReference>
<dbReference type="GO" id="GO:0005634">
    <property type="term" value="C:nucleus"/>
    <property type="evidence" value="ECO:0007669"/>
    <property type="project" value="UniProtKB-SubCell"/>
</dbReference>
<dbReference type="InterPro" id="IPR043246">
    <property type="entry name" value="SPMIP5"/>
</dbReference>
<dbReference type="InterPro" id="IPR055215">
    <property type="entry name" value="SPMIP5_dom"/>
</dbReference>
<dbReference type="PANTHER" id="PTHR47301:SF1">
    <property type="entry name" value="CHROMOSOME 10 OPEN READING FRAME 82"/>
    <property type="match status" value="1"/>
</dbReference>
<dbReference type="PANTHER" id="PTHR47301">
    <property type="entry name" value="HYPOTHETICAL PROTEIN LOC681006"/>
    <property type="match status" value="1"/>
</dbReference>
<dbReference type="Pfam" id="PF22573">
    <property type="entry name" value="SPMIP5"/>
    <property type="match status" value="1"/>
</dbReference>
<name>SMIP5_HUMAN</name>
<keyword id="KW-0025">Alternative splicing</keyword>
<keyword id="KW-0966">Cell projection</keyword>
<keyword id="KW-0969">Cilium</keyword>
<keyword id="KW-0963">Cytoplasm</keyword>
<keyword id="KW-0206">Cytoskeleton</keyword>
<keyword id="KW-0282">Flagellum</keyword>
<keyword id="KW-0539">Nucleus</keyword>
<keyword id="KW-1267">Proteomics identification</keyword>
<keyword id="KW-1185">Reference proteome</keyword>
<organism>
    <name type="scientific">Homo sapiens</name>
    <name type="common">Human</name>
    <dbReference type="NCBI Taxonomy" id="9606"/>
    <lineage>
        <taxon>Eukaryota</taxon>
        <taxon>Metazoa</taxon>
        <taxon>Chordata</taxon>
        <taxon>Craniata</taxon>
        <taxon>Vertebrata</taxon>
        <taxon>Euteleostomi</taxon>
        <taxon>Mammalia</taxon>
        <taxon>Eutheria</taxon>
        <taxon>Euarchontoglires</taxon>
        <taxon>Primates</taxon>
        <taxon>Haplorrhini</taxon>
        <taxon>Catarrhini</taxon>
        <taxon>Hominidae</taxon>
        <taxon>Homo</taxon>
    </lineage>
</organism>
<evidence type="ECO:0000250" key="1">
    <source>
        <dbReference type="UniProtKB" id="A6QPC0"/>
    </source>
</evidence>
<evidence type="ECO:0000250" key="2">
    <source>
        <dbReference type="UniProtKB" id="Q9CQT6"/>
    </source>
</evidence>
<evidence type="ECO:0000269" key="3">
    <source>
    </source>
</evidence>
<evidence type="ECO:0000303" key="4">
    <source>
    </source>
</evidence>
<evidence type="ECO:0000303" key="5">
    <source>
    </source>
</evidence>
<evidence type="ECO:0000312" key="6">
    <source>
        <dbReference type="HGNC" id="HGNC:28500"/>
    </source>
</evidence>
<protein>
    <recommendedName>
        <fullName evidence="6">Sperm-associated microtubule inner protein 5</fullName>
    </recommendedName>
</protein>